<reference key="1">
    <citation type="journal article" date="2003" name="Genome Res.">
        <title>Comparative complete genome sequence analysis of the amino acid replacements responsible for the thermostability of Corynebacterium efficiens.</title>
        <authorList>
            <person name="Nishio Y."/>
            <person name="Nakamura Y."/>
            <person name="Kawarabayasi Y."/>
            <person name="Usuda Y."/>
            <person name="Kimura E."/>
            <person name="Sugimoto S."/>
            <person name="Matsui K."/>
            <person name="Yamagishi A."/>
            <person name="Kikuchi H."/>
            <person name="Ikeo K."/>
            <person name="Gojobori T."/>
        </authorList>
    </citation>
    <scope>NUCLEOTIDE SEQUENCE [LARGE SCALE GENOMIC DNA]</scope>
    <source>
        <strain>DSM 44549 / YS-314 / AJ 12310 / JCM 11189 / NBRC 100395</strain>
    </source>
</reference>
<accession>Q8FRQ5</accession>
<dbReference type="EC" id="2.4.2.9" evidence="1"/>
<dbReference type="EMBL" id="BA000035">
    <property type="protein sequence ID" value="BAC17514.1"/>
    <property type="status" value="ALT_INIT"/>
    <property type="molecule type" value="Genomic_DNA"/>
</dbReference>
<dbReference type="RefSeq" id="WP_035109787.1">
    <property type="nucleotide sequence ID" value="NC_004369.1"/>
</dbReference>
<dbReference type="SMR" id="Q8FRQ5"/>
<dbReference type="STRING" id="196164.gene:10741106"/>
<dbReference type="KEGG" id="cef:CE0704"/>
<dbReference type="eggNOG" id="COG0035">
    <property type="taxonomic scope" value="Bacteria"/>
</dbReference>
<dbReference type="HOGENOM" id="CLU_067096_2_3_11"/>
<dbReference type="OrthoDB" id="9781675at2"/>
<dbReference type="UniPathway" id="UPA00574">
    <property type="reaction ID" value="UER00636"/>
</dbReference>
<dbReference type="Proteomes" id="UP000001409">
    <property type="component" value="Chromosome"/>
</dbReference>
<dbReference type="GO" id="GO:0005525">
    <property type="term" value="F:GTP binding"/>
    <property type="evidence" value="ECO:0007669"/>
    <property type="project" value="UniProtKB-KW"/>
</dbReference>
<dbReference type="GO" id="GO:0000287">
    <property type="term" value="F:magnesium ion binding"/>
    <property type="evidence" value="ECO:0007669"/>
    <property type="project" value="UniProtKB-UniRule"/>
</dbReference>
<dbReference type="GO" id="GO:0004845">
    <property type="term" value="F:uracil phosphoribosyltransferase activity"/>
    <property type="evidence" value="ECO:0007669"/>
    <property type="project" value="UniProtKB-UniRule"/>
</dbReference>
<dbReference type="GO" id="GO:0044206">
    <property type="term" value="P:UMP salvage"/>
    <property type="evidence" value="ECO:0007669"/>
    <property type="project" value="UniProtKB-UniRule"/>
</dbReference>
<dbReference type="GO" id="GO:0006223">
    <property type="term" value="P:uracil salvage"/>
    <property type="evidence" value="ECO:0007669"/>
    <property type="project" value="InterPro"/>
</dbReference>
<dbReference type="CDD" id="cd06223">
    <property type="entry name" value="PRTases_typeI"/>
    <property type="match status" value="1"/>
</dbReference>
<dbReference type="FunFam" id="3.40.50.2020:FF:000003">
    <property type="entry name" value="Uracil phosphoribosyltransferase"/>
    <property type="match status" value="1"/>
</dbReference>
<dbReference type="Gene3D" id="3.40.50.2020">
    <property type="match status" value="1"/>
</dbReference>
<dbReference type="HAMAP" id="MF_01218_B">
    <property type="entry name" value="Upp_B"/>
    <property type="match status" value="1"/>
</dbReference>
<dbReference type="InterPro" id="IPR000836">
    <property type="entry name" value="PRibTrfase_dom"/>
</dbReference>
<dbReference type="InterPro" id="IPR029057">
    <property type="entry name" value="PRTase-like"/>
</dbReference>
<dbReference type="InterPro" id="IPR034332">
    <property type="entry name" value="Upp_B"/>
</dbReference>
<dbReference type="InterPro" id="IPR050054">
    <property type="entry name" value="UPRTase/APRTase"/>
</dbReference>
<dbReference type="InterPro" id="IPR005765">
    <property type="entry name" value="Ura_phspho_trans"/>
</dbReference>
<dbReference type="NCBIfam" id="NF001097">
    <property type="entry name" value="PRK00129.1"/>
    <property type="match status" value="1"/>
</dbReference>
<dbReference type="NCBIfam" id="TIGR01091">
    <property type="entry name" value="upp"/>
    <property type="match status" value="1"/>
</dbReference>
<dbReference type="PANTHER" id="PTHR32315">
    <property type="entry name" value="ADENINE PHOSPHORIBOSYLTRANSFERASE"/>
    <property type="match status" value="1"/>
</dbReference>
<dbReference type="PANTHER" id="PTHR32315:SF4">
    <property type="entry name" value="URACIL PHOSPHORIBOSYLTRANSFERASE, CHLOROPLASTIC"/>
    <property type="match status" value="1"/>
</dbReference>
<dbReference type="Pfam" id="PF14681">
    <property type="entry name" value="UPRTase"/>
    <property type="match status" value="1"/>
</dbReference>
<dbReference type="SUPFAM" id="SSF53271">
    <property type="entry name" value="PRTase-like"/>
    <property type="match status" value="1"/>
</dbReference>
<comment type="function">
    <text evidence="1">Catalyzes the conversion of uracil and 5-phospho-alpha-D-ribose 1-diphosphate (PRPP) to UMP and diphosphate.</text>
</comment>
<comment type="catalytic activity">
    <reaction evidence="1">
        <text>UMP + diphosphate = 5-phospho-alpha-D-ribose 1-diphosphate + uracil</text>
        <dbReference type="Rhea" id="RHEA:13017"/>
        <dbReference type="ChEBI" id="CHEBI:17568"/>
        <dbReference type="ChEBI" id="CHEBI:33019"/>
        <dbReference type="ChEBI" id="CHEBI:57865"/>
        <dbReference type="ChEBI" id="CHEBI:58017"/>
        <dbReference type="EC" id="2.4.2.9"/>
    </reaction>
</comment>
<comment type="cofactor">
    <cofactor evidence="1">
        <name>Mg(2+)</name>
        <dbReference type="ChEBI" id="CHEBI:18420"/>
    </cofactor>
    <text evidence="1">Binds 1 Mg(2+) ion per subunit. The magnesium is bound as Mg-PRPP.</text>
</comment>
<comment type="activity regulation">
    <text evidence="1">Allosterically activated by GTP.</text>
</comment>
<comment type="pathway">
    <text evidence="1">Pyrimidine metabolism; UMP biosynthesis via salvage pathway; UMP from uracil: step 1/1.</text>
</comment>
<comment type="similarity">
    <text evidence="1">Belongs to the UPRTase family.</text>
</comment>
<comment type="sequence caution" evidence="2">
    <conflict type="erroneous initiation">
        <sequence resource="EMBL-CDS" id="BAC17514"/>
    </conflict>
</comment>
<keyword id="KW-0021">Allosteric enzyme</keyword>
<keyword id="KW-0328">Glycosyltransferase</keyword>
<keyword id="KW-0342">GTP-binding</keyword>
<keyword id="KW-0460">Magnesium</keyword>
<keyword id="KW-0547">Nucleotide-binding</keyword>
<keyword id="KW-1185">Reference proteome</keyword>
<keyword id="KW-0808">Transferase</keyword>
<organism>
    <name type="scientific">Corynebacterium efficiens (strain DSM 44549 / YS-314 / AJ 12310 / JCM 11189 / NBRC 100395)</name>
    <dbReference type="NCBI Taxonomy" id="196164"/>
    <lineage>
        <taxon>Bacteria</taxon>
        <taxon>Bacillati</taxon>
        <taxon>Actinomycetota</taxon>
        <taxon>Actinomycetes</taxon>
        <taxon>Mycobacteriales</taxon>
        <taxon>Corynebacteriaceae</taxon>
        <taxon>Corynebacterium</taxon>
    </lineage>
</organism>
<proteinExistence type="inferred from homology"/>
<name>UPP_COREF</name>
<gene>
    <name evidence="1" type="primary">upp</name>
    <name type="ordered locus">CE0704</name>
</gene>
<sequence length="211" mass="22543">MDITIVNHPLVASRLTLMRDERSDNAAFRAAASDLGAMLIYEASRDLAVEHFDTQTPVAVAEGTRLEKPPIIVPIIRAGLGMIDPALSMIPDAQVGFIGLARDEETHEPVPYLEALPEDLSDQPVFLVDPMLATGGSLLHAIRLLAERGATDITAICMVSAQPGVDALKNSGLPCRLVTAAIDPELNEDAYIVPGLGDAGDRLYGPRNIEL</sequence>
<protein>
    <recommendedName>
        <fullName evidence="1">Uracil phosphoribosyltransferase</fullName>
        <ecNumber evidence="1">2.4.2.9</ecNumber>
    </recommendedName>
    <alternativeName>
        <fullName evidence="1">UMP pyrophosphorylase</fullName>
    </alternativeName>
    <alternativeName>
        <fullName evidence="1">UPRTase</fullName>
    </alternativeName>
</protein>
<evidence type="ECO:0000255" key="1">
    <source>
        <dbReference type="HAMAP-Rule" id="MF_01218"/>
    </source>
</evidence>
<evidence type="ECO:0000305" key="2"/>
<feature type="chain" id="PRO_0000120819" description="Uracil phosphoribosyltransferase">
    <location>
        <begin position="1"/>
        <end position="211"/>
    </location>
</feature>
<feature type="binding site" evidence="1">
    <location>
        <position position="77"/>
    </location>
    <ligand>
        <name>5-phospho-alpha-D-ribose 1-diphosphate</name>
        <dbReference type="ChEBI" id="CHEBI:58017"/>
    </ligand>
</feature>
<feature type="binding site" evidence="1">
    <location>
        <position position="102"/>
    </location>
    <ligand>
        <name>5-phospho-alpha-D-ribose 1-diphosphate</name>
        <dbReference type="ChEBI" id="CHEBI:58017"/>
    </ligand>
</feature>
<feature type="binding site" evidence="1">
    <location>
        <begin position="129"/>
        <end position="137"/>
    </location>
    <ligand>
        <name>5-phospho-alpha-D-ribose 1-diphosphate</name>
        <dbReference type="ChEBI" id="CHEBI:58017"/>
    </ligand>
</feature>
<feature type="binding site" evidence="1">
    <location>
        <position position="192"/>
    </location>
    <ligand>
        <name>uracil</name>
        <dbReference type="ChEBI" id="CHEBI:17568"/>
    </ligand>
</feature>
<feature type="binding site" evidence="1">
    <location>
        <begin position="197"/>
        <end position="199"/>
    </location>
    <ligand>
        <name>uracil</name>
        <dbReference type="ChEBI" id="CHEBI:17568"/>
    </ligand>
</feature>
<feature type="binding site" evidence="1">
    <location>
        <position position="198"/>
    </location>
    <ligand>
        <name>5-phospho-alpha-D-ribose 1-diphosphate</name>
        <dbReference type="ChEBI" id="CHEBI:58017"/>
    </ligand>
</feature>